<protein>
    <recommendedName>
        <fullName>Probable endopeptidase p60</fullName>
        <ecNumber>3.4.-.-</ecNumber>
    </recommendedName>
    <alternativeName>
        <fullName>Invasion-associated protein p60</fullName>
    </alternativeName>
</protein>
<sequence>MNMKKATIAATAGIAVTAFAAPTIASASTVVVEAGDTLWGIAQSKGTTVDAIKKANNLTTDKIVPGQKLQVNNEVAAAEKTEKSVSATWLNVRSGAGVDNSIITSIKGGTKVTVETTESNGWHKITYNDGKTGFVNGKYLTDKAVSTPVAPTQEVKKETTTQQAAPAAETKTEVKQTTQATTPAPKVAETKETPVVDQNATTHAVKSGDTIWALSVKYGVSVQDIMSWNNLSSSSIYVGQKLAIKQTANTATPKAEVKTEAPAAEKQAAPVVKENTNTNTATTEKKETATQQQTAPKAPTEAAKPAPAPSTNTNANKTNTNTNTNTNTNNTNTNTPSKNTNTNSNTNTNTNSNTNANQGSSNNNSNSSASAIIAEAQKHLGKAYSWGGNGPTTFDCSGYTKYVFAKAGISLPRTSGAQYASTTRISESQAKPGDLVFFDYGSGISHVGIYVGNGQMINAQDNGVKYDNIHGSGWGKYLVGFGRV</sequence>
<feature type="signal peptide" evidence="6">
    <location>
        <begin position="1"/>
        <end position="27"/>
    </location>
</feature>
<feature type="chain" id="PRO_0000019760" description="Probable endopeptidase p60">
    <location>
        <begin position="28"/>
        <end position="484"/>
    </location>
</feature>
<feature type="domain" description="LysM 1" evidence="2">
    <location>
        <begin position="28"/>
        <end position="71"/>
    </location>
</feature>
<feature type="domain" description="SH3b" evidence="1">
    <location>
        <begin position="80"/>
        <end position="144"/>
    </location>
</feature>
<feature type="domain" description="LysM 2" evidence="2">
    <location>
        <begin position="201"/>
        <end position="244"/>
    </location>
</feature>
<feature type="domain" description="NlpC/P60" evidence="3">
    <location>
        <begin position="366"/>
        <end position="484"/>
    </location>
</feature>
<feature type="region of interest" description="Disordered" evidence="4">
    <location>
        <begin position="150"/>
        <end position="192"/>
    </location>
</feature>
<feature type="region of interest" description="Disordered" evidence="4">
    <location>
        <begin position="254"/>
        <end position="367"/>
    </location>
</feature>
<feature type="region of interest" description="19 X 2 AA tandem repeats of T-N">
    <location>
        <begin position="311"/>
        <end position="355"/>
    </location>
</feature>
<feature type="compositionally biased region" description="Low complexity" evidence="4">
    <location>
        <begin position="160"/>
        <end position="169"/>
    </location>
</feature>
<feature type="compositionally biased region" description="Low complexity" evidence="4">
    <location>
        <begin position="273"/>
        <end position="282"/>
    </location>
</feature>
<feature type="compositionally biased region" description="Low complexity" evidence="4">
    <location>
        <begin position="289"/>
        <end position="367"/>
    </location>
</feature>
<feature type="active site" description="Nucleophile" evidence="3">
    <location>
        <position position="396"/>
    </location>
</feature>
<feature type="active site" description="Proton acceptor" evidence="3">
    <location>
        <position position="446"/>
    </location>
</feature>
<feature type="active site" evidence="3">
    <location>
        <position position="458"/>
    </location>
</feature>
<feature type="sequence variant" description="In strain: Mackaness.">
    <original>S</original>
    <variation>T</variation>
    <location>
        <position position="94"/>
    </location>
</feature>
<feature type="sequence variant" description="In strain: Mackaness.">
    <original>A</original>
    <variation>V</variation>
    <location>
        <position position="167"/>
    </location>
</feature>
<feature type="sequence variant" description="In strain: Mackaness.">
    <original>V</original>
    <variation>I</variation>
    <location>
        <position position="196"/>
    </location>
</feature>
<feature type="sequence variant" description="In strain: Mackaness.">
    <location>
        <begin position="326"/>
        <end position="331"/>
    </location>
</feature>
<accession>P21171</accession>
<accession>Q03493</accession>
<keyword id="KW-0903">Direct protein sequencing</keyword>
<keyword id="KW-0378">Hydrolase</keyword>
<keyword id="KW-0645">Protease</keyword>
<keyword id="KW-1185">Reference proteome</keyword>
<keyword id="KW-0677">Repeat</keyword>
<keyword id="KW-0964">Secreted</keyword>
<keyword id="KW-0732">Signal</keyword>
<keyword id="KW-0788">Thiol protease</keyword>
<comment type="function">
    <text>This major extracellular protein may be involved in the invasion of non-professional phagocytic cells by Listeria.</text>
</comment>
<comment type="subcellular location">
    <subcellularLocation>
        <location evidence="5">Cell surface</location>
    </subcellularLocation>
    <subcellularLocation>
        <location evidence="7">Secreted</location>
    </subcellularLocation>
</comment>
<comment type="induction">
    <text evidence="5">Present in both exponential and stationary phase (at protein level).</text>
</comment>
<comment type="domain">
    <text>LysM domains are thought to be involved in peptidoglycan binding.</text>
</comment>
<comment type="similarity">
    <text evidence="3 8">Belongs to the peptidase C40 family.</text>
</comment>
<comment type="sequence caution" evidence="8">
    <conflict type="erroneous initiation">
        <sequence resource="EMBL-CDS" id="CAC98661"/>
    </conflict>
    <text>Truncated N-terminus.</text>
</comment>
<proteinExistence type="evidence at protein level"/>
<gene>
    <name type="primary">iap</name>
    <name type="ordered locus">lmo0582</name>
</gene>
<evidence type="ECO:0000255" key="1">
    <source>
        <dbReference type="PROSITE-ProRule" id="PRU01117"/>
    </source>
</evidence>
<evidence type="ECO:0000255" key="2">
    <source>
        <dbReference type="PROSITE-ProRule" id="PRU01118"/>
    </source>
</evidence>
<evidence type="ECO:0000255" key="3">
    <source>
        <dbReference type="PROSITE-ProRule" id="PRU01284"/>
    </source>
</evidence>
<evidence type="ECO:0000256" key="4">
    <source>
        <dbReference type="SAM" id="MobiDB-lite"/>
    </source>
</evidence>
<evidence type="ECO:0000269" key="5">
    <source>
    </source>
</evidence>
<evidence type="ECO:0000269" key="6">
    <source>
    </source>
</evidence>
<evidence type="ECO:0000269" key="7">
    <source>
    </source>
</evidence>
<evidence type="ECO:0000305" key="8"/>
<dbReference type="EC" id="3.4.-.-"/>
<dbReference type="EMBL" id="X52268">
    <property type="protein sequence ID" value="CAA36509.1"/>
    <property type="molecule type" value="Genomic_DNA"/>
</dbReference>
<dbReference type="EMBL" id="M80351">
    <property type="protein sequence ID" value="AAA25280.1"/>
    <property type="molecule type" value="Genomic_DNA"/>
</dbReference>
<dbReference type="EMBL" id="AL591975">
    <property type="protein sequence ID" value="CAC98661.1"/>
    <property type="status" value="ALT_INIT"/>
    <property type="molecule type" value="Genomic_DNA"/>
</dbReference>
<dbReference type="PIR" id="A41487">
    <property type="entry name" value="A41487"/>
</dbReference>
<dbReference type="PIR" id="AG1147">
    <property type="entry name" value="AG1147"/>
</dbReference>
<dbReference type="RefSeq" id="NP_464110.1">
    <property type="nucleotide sequence ID" value="NC_003210.1"/>
</dbReference>
<dbReference type="STRING" id="169963.gene:17593233"/>
<dbReference type="CAZy" id="CBM50">
    <property type="family name" value="Carbohydrate-Binding Module Family 50"/>
</dbReference>
<dbReference type="PaxDb" id="169963-lmo0582"/>
<dbReference type="EnsemblBacteria" id="CAC98661">
    <property type="protein sequence ID" value="CAC98661"/>
    <property type="gene ID" value="CAC98661"/>
</dbReference>
<dbReference type="GeneID" id="985140"/>
<dbReference type="KEGG" id="lmo:lmo0582"/>
<dbReference type="PATRIC" id="fig|169963.11.peg.601"/>
<dbReference type="eggNOG" id="COG0791">
    <property type="taxonomic scope" value="Bacteria"/>
</dbReference>
<dbReference type="eggNOG" id="COG1388">
    <property type="taxonomic scope" value="Bacteria"/>
</dbReference>
<dbReference type="eggNOG" id="COG3103">
    <property type="taxonomic scope" value="Bacteria"/>
</dbReference>
<dbReference type="HOGENOM" id="CLU_581142_0_0_9"/>
<dbReference type="OrthoDB" id="9813368at2"/>
<dbReference type="PhylomeDB" id="P21171"/>
<dbReference type="Proteomes" id="UP000000817">
    <property type="component" value="Chromosome"/>
</dbReference>
<dbReference type="GO" id="GO:0009986">
    <property type="term" value="C:cell surface"/>
    <property type="evidence" value="ECO:0007669"/>
    <property type="project" value="UniProtKB-SubCell"/>
</dbReference>
<dbReference type="GO" id="GO:0005576">
    <property type="term" value="C:extracellular region"/>
    <property type="evidence" value="ECO:0007669"/>
    <property type="project" value="UniProtKB-SubCell"/>
</dbReference>
<dbReference type="GO" id="GO:0008234">
    <property type="term" value="F:cysteine-type peptidase activity"/>
    <property type="evidence" value="ECO:0007669"/>
    <property type="project" value="UniProtKB-KW"/>
</dbReference>
<dbReference type="GO" id="GO:0004175">
    <property type="term" value="F:endopeptidase activity"/>
    <property type="evidence" value="ECO:0000318"/>
    <property type="project" value="GO_Central"/>
</dbReference>
<dbReference type="GO" id="GO:0000270">
    <property type="term" value="P:peptidoglycan metabolic process"/>
    <property type="evidence" value="ECO:0000318"/>
    <property type="project" value="GO_Central"/>
</dbReference>
<dbReference type="GO" id="GO:0006508">
    <property type="term" value="P:proteolysis"/>
    <property type="evidence" value="ECO:0007669"/>
    <property type="project" value="UniProtKB-KW"/>
</dbReference>
<dbReference type="CDD" id="cd00118">
    <property type="entry name" value="LysM"/>
    <property type="match status" value="2"/>
</dbReference>
<dbReference type="Gene3D" id="3.90.1720.10">
    <property type="entry name" value="endopeptidase domain like (from Nostoc punctiforme)"/>
    <property type="match status" value="1"/>
</dbReference>
<dbReference type="Gene3D" id="3.10.350.10">
    <property type="entry name" value="LysM domain"/>
    <property type="match status" value="2"/>
</dbReference>
<dbReference type="Gene3D" id="2.30.30.40">
    <property type="entry name" value="SH3 Domains"/>
    <property type="match status" value="1"/>
</dbReference>
<dbReference type="InterPro" id="IPR018392">
    <property type="entry name" value="LysM_dom"/>
</dbReference>
<dbReference type="InterPro" id="IPR036779">
    <property type="entry name" value="LysM_dom_sf"/>
</dbReference>
<dbReference type="InterPro" id="IPR000064">
    <property type="entry name" value="NLP_P60_dom"/>
</dbReference>
<dbReference type="InterPro" id="IPR038765">
    <property type="entry name" value="Papain-like_cys_pep_sf"/>
</dbReference>
<dbReference type="InterPro" id="IPR051202">
    <property type="entry name" value="Peptidase_C40"/>
</dbReference>
<dbReference type="InterPro" id="IPR003646">
    <property type="entry name" value="SH3-like_bac-type"/>
</dbReference>
<dbReference type="NCBIfam" id="NF010495">
    <property type="entry name" value="PRK13914.1"/>
    <property type="match status" value="1"/>
</dbReference>
<dbReference type="PANTHER" id="PTHR47053">
    <property type="entry name" value="MUREIN DD-ENDOPEPTIDASE MEPH-RELATED"/>
    <property type="match status" value="1"/>
</dbReference>
<dbReference type="PANTHER" id="PTHR47053:SF1">
    <property type="entry name" value="MUREIN DD-ENDOPEPTIDASE MEPH-RELATED"/>
    <property type="match status" value="1"/>
</dbReference>
<dbReference type="Pfam" id="PF01476">
    <property type="entry name" value="LysM"/>
    <property type="match status" value="2"/>
</dbReference>
<dbReference type="Pfam" id="PF00877">
    <property type="entry name" value="NLPC_P60"/>
    <property type="match status" value="1"/>
</dbReference>
<dbReference type="Pfam" id="PF08239">
    <property type="entry name" value="SH3_3"/>
    <property type="match status" value="1"/>
</dbReference>
<dbReference type="SMART" id="SM00257">
    <property type="entry name" value="LysM"/>
    <property type="match status" value="2"/>
</dbReference>
<dbReference type="SMART" id="SM00287">
    <property type="entry name" value="SH3b"/>
    <property type="match status" value="1"/>
</dbReference>
<dbReference type="SUPFAM" id="SSF54001">
    <property type="entry name" value="Cysteine proteinases"/>
    <property type="match status" value="1"/>
</dbReference>
<dbReference type="SUPFAM" id="SSF54106">
    <property type="entry name" value="LysM domain"/>
    <property type="match status" value="2"/>
</dbReference>
<dbReference type="PROSITE" id="PS51782">
    <property type="entry name" value="LYSM"/>
    <property type="match status" value="2"/>
</dbReference>
<dbReference type="PROSITE" id="PS51935">
    <property type="entry name" value="NLPC_P60"/>
    <property type="match status" value="1"/>
</dbReference>
<dbReference type="PROSITE" id="PS51781">
    <property type="entry name" value="SH3B"/>
    <property type="match status" value="1"/>
</dbReference>
<name>P60_LISMO</name>
<organism>
    <name type="scientific">Listeria monocytogenes serovar 1/2a (strain ATCC BAA-679 / EGD-e)</name>
    <dbReference type="NCBI Taxonomy" id="169963"/>
    <lineage>
        <taxon>Bacteria</taxon>
        <taxon>Bacillati</taxon>
        <taxon>Bacillota</taxon>
        <taxon>Bacilli</taxon>
        <taxon>Bacillales</taxon>
        <taxon>Listeriaceae</taxon>
        <taxon>Listeria</taxon>
    </lineage>
</organism>
<reference key="1">
    <citation type="journal article" date="1990" name="Infect. Immun.">
        <title>The gene coding for protein p60 of Listeria monocytogenes and its use as a specific probe for Listeria monocytogenes.</title>
        <authorList>
            <person name="Koehler S."/>
            <person name="Leimeister-Waechter M."/>
            <person name="Chakraborty T."/>
            <person name="Lottspeich F."/>
            <person name="Goebel W."/>
        </authorList>
    </citation>
    <scope>NUCLEOTIDE SEQUENCE [GENOMIC DNA]</scope>
    <scope>PROTEIN SEQUENCE OF 28-49</scope>
    <source>
        <strain>EGD / Serovar 1/2a</strain>
    </source>
</reference>
<reference key="2">
    <citation type="journal article" date="1992" name="J. Bacteriol.">
        <title>Structural and functional properties of the p60 proteins from different Listeria species.</title>
        <authorList>
            <person name="Bubert A."/>
            <person name="Kuhn M."/>
            <person name="Goebel W."/>
            <person name="Koehler S."/>
        </authorList>
    </citation>
    <scope>NUCLEOTIDE SEQUENCE [GENOMIC DNA]</scope>
    <scope>DISCUSSION OF SEQUENCE</scope>
    <source>
        <strain>EGD / Mackaness / Serovar 1/2a</strain>
    </source>
</reference>
<reference key="3">
    <citation type="journal article" date="2001" name="Science">
        <title>Comparative genomics of Listeria species.</title>
        <authorList>
            <person name="Glaser P."/>
            <person name="Frangeul L."/>
            <person name="Buchrieser C."/>
            <person name="Rusniok C."/>
            <person name="Amend A."/>
            <person name="Baquero F."/>
            <person name="Berche P."/>
            <person name="Bloecker H."/>
            <person name="Brandt P."/>
            <person name="Chakraborty T."/>
            <person name="Charbit A."/>
            <person name="Chetouani F."/>
            <person name="Couve E."/>
            <person name="de Daruvar A."/>
            <person name="Dehoux P."/>
            <person name="Domann E."/>
            <person name="Dominguez-Bernal G."/>
            <person name="Duchaud E."/>
            <person name="Durant L."/>
            <person name="Dussurget O."/>
            <person name="Entian K.-D."/>
            <person name="Fsihi H."/>
            <person name="Garcia-del Portillo F."/>
            <person name="Garrido P."/>
            <person name="Gautier L."/>
            <person name="Goebel W."/>
            <person name="Gomez-Lopez N."/>
            <person name="Hain T."/>
            <person name="Hauf J."/>
            <person name="Jackson D."/>
            <person name="Jones L.-M."/>
            <person name="Kaerst U."/>
            <person name="Kreft J."/>
            <person name="Kuhn M."/>
            <person name="Kunst F."/>
            <person name="Kurapkat G."/>
            <person name="Madueno E."/>
            <person name="Maitournam A."/>
            <person name="Mata Vicente J."/>
            <person name="Ng E."/>
            <person name="Nedjari H."/>
            <person name="Nordsiek G."/>
            <person name="Novella S."/>
            <person name="de Pablos B."/>
            <person name="Perez-Diaz J.-C."/>
            <person name="Purcell R."/>
            <person name="Remmel B."/>
            <person name="Rose M."/>
            <person name="Schlueter T."/>
            <person name="Simoes N."/>
            <person name="Tierrez A."/>
            <person name="Vazquez-Boland J.-A."/>
            <person name="Voss H."/>
            <person name="Wehland J."/>
            <person name="Cossart P."/>
        </authorList>
    </citation>
    <scope>NUCLEOTIDE SEQUENCE [LARGE SCALE GENOMIC DNA]</scope>
    <source>
        <strain>ATCC BAA-679 / EGD-e</strain>
    </source>
</reference>
<reference key="4">
    <citation type="journal article" date="2005" name="Proteomics">
        <title>Identification of substrates of the Listeria monocytogenes sortases A and B by a non-gel proteomic analysis.</title>
        <authorList>
            <person name="Pucciarelli M.G."/>
            <person name="Calvo E."/>
            <person name="Sabet C."/>
            <person name="Bierne H."/>
            <person name="Cossart P."/>
            <person name="Garcia-del Portillo F."/>
        </authorList>
    </citation>
    <scope>IDENTIFICATION BY MASS SPECTROMETRY</scope>
    <scope>SUBCELLULAR LOCATION</scope>
    <scope>INDUCTION</scope>
    <source>
        <strain>ATCC BAA-679 / EGD-e</strain>
    </source>
</reference>
<reference key="5">
    <citation type="journal article" date="2012" name="Int. Microbiol.">
        <title>Contribution of sortase A to the regulation of Listeria monocytogenes LPXTG surface proteins.</title>
        <authorList>
            <person name="Mariscotti J.F."/>
            <person name="Quereda J.J."/>
            <person name="Pucciarelli M.G."/>
        </authorList>
    </citation>
    <scope>SUBCELLULAR LOCATION</scope>
    <source>
        <strain>ATCC BAA-679 / EGD-e</strain>
    </source>
</reference>